<name>RKM5_LACTC</name>
<organism>
    <name type="scientific">Lachancea thermotolerans (strain ATCC 56472 / CBS 6340 / NRRL Y-8284)</name>
    <name type="common">Yeast</name>
    <name type="synonym">Kluyveromyces thermotolerans</name>
    <dbReference type="NCBI Taxonomy" id="559295"/>
    <lineage>
        <taxon>Eukaryota</taxon>
        <taxon>Fungi</taxon>
        <taxon>Dikarya</taxon>
        <taxon>Ascomycota</taxon>
        <taxon>Saccharomycotina</taxon>
        <taxon>Saccharomycetes</taxon>
        <taxon>Saccharomycetales</taxon>
        <taxon>Saccharomycetaceae</taxon>
        <taxon>Lachancea</taxon>
    </lineage>
</organism>
<proteinExistence type="inferred from homology"/>
<feature type="chain" id="PRO_0000411043" description="Ribosomal lysine N-methyltransferase 5">
    <location>
        <begin position="1"/>
        <end position="334"/>
    </location>
</feature>
<feature type="binding site" evidence="2">
    <location>
        <position position="88"/>
    </location>
    <ligand>
        <name>S-adenosyl-L-methionine</name>
        <dbReference type="ChEBI" id="CHEBI:59789"/>
    </ligand>
</feature>
<feature type="binding site" evidence="2">
    <location>
        <begin position="155"/>
        <end position="157"/>
    </location>
    <ligand>
        <name>S-adenosyl-L-methionine</name>
        <dbReference type="ChEBI" id="CHEBI:59789"/>
    </ligand>
</feature>
<feature type="binding site" evidence="2">
    <location>
        <position position="177"/>
    </location>
    <ligand>
        <name>S-adenosyl-L-methionine</name>
        <dbReference type="ChEBI" id="CHEBI:59789"/>
    </ligand>
</feature>
<feature type="binding site" evidence="2">
    <location>
        <position position="227"/>
    </location>
    <ligand>
        <name>S-adenosyl-L-methionine</name>
        <dbReference type="ChEBI" id="CHEBI:59789"/>
    </ligand>
</feature>
<feature type="binding site" evidence="2">
    <location>
        <position position="254"/>
    </location>
    <ligand>
        <name>S-adenosyl-L-methionine</name>
        <dbReference type="ChEBI" id="CHEBI:59789"/>
    </ligand>
</feature>
<evidence type="ECO:0000250" key="1">
    <source>
        <dbReference type="UniProtKB" id="Q12367"/>
    </source>
</evidence>
<evidence type="ECO:0000250" key="2">
    <source>
        <dbReference type="UniProtKB" id="Q9H867"/>
    </source>
</evidence>
<evidence type="ECO:0000305" key="3"/>
<protein>
    <recommendedName>
        <fullName evidence="1">Ribosomal lysine N-methyltransferase 5</fullName>
        <ecNumber evidence="1">2.1.1.-</ecNumber>
    </recommendedName>
</protein>
<dbReference type="EC" id="2.1.1.-" evidence="1"/>
<dbReference type="EMBL" id="CU928171">
    <property type="protein sequence ID" value="CAR25110.1"/>
    <property type="molecule type" value="Genomic_DNA"/>
</dbReference>
<dbReference type="RefSeq" id="XP_002555547.1">
    <property type="nucleotide sequence ID" value="XM_002555501.1"/>
</dbReference>
<dbReference type="SMR" id="C5DMU9"/>
<dbReference type="FunCoup" id="C5DMU9">
    <property type="interactions" value="22"/>
</dbReference>
<dbReference type="STRING" id="559295.C5DMU9"/>
<dbReference type="GeneID" id="8293826"/>
<dbReference type="KEGG" id="lth:KLTH0G11792g"/>
<dbReference type="eggNOG" id="KOG1018">
    <property type="taxonomic scope" value="Eukaryota"/>
</dbReference>
<dbReference type="HOGENOM" id="CLU_051532_0_0_1"/>
<dbReference type="InParanoid" id="C5DMU9"/>
<dbReference type="OMA" id="ACDTIYN"/>
<dbReference type="OrthoDB" id="2529286at2759"/>
<dbReference type="Proteomes" id="UP000002036">
    <property type="component" value="Chromosome G"/>
</dbReference>
<dbReference type="GO" id="GO:0005829">
    <property type="term" value="C:cytosol"/>
    <property type="evidence" value="ECO:0007669"/>
    <property type="project" value="TreeGrafter"/>
</dbReference>
<dbReference type="GO" id="GO:0032991">
    <property type="term" value="C:protein-containing complex"/>
    <property type="evidence" value="ECO:0007669"/>
    <property type="project" value="TreeGrafter"/>
</dbReference>
<dbReference type="GO" id="GO:0008757">
    <property type="term" value="F:S-adenosylmethionine-dependent methyltransferase activity"/>
    <property type="evidence" value="ECO:0007669"/>
    <property type="project" value="UniProtKB-ARBA"/>
</dbReference>
<dbReference type="GO" id="GO:0032259">
    <property type="term" value="P:methylation"/>
    <property type="evidence" value="ECO:0007669"/>
    <property type="project" value="UniProtKB-KW"/>
</dbReference>
<dbReference type="Gene3D" id="3.40.50.150">
    <property type="entry name" value="Vaccinia Virus protein VP39"/>
    <property type="match status" value="1"/>
</dbReference>
<dbReference type="InterPro" id="IPR019410">
    <property type="entry name" value="Methyltransf_16"/>
</dbReference>
<dbReference type="InterPro" id="IPR029063">
    <property type="entry name" value="SAM-dependent_MTases_sf"/>
</dbReference>
<dbReference type="PANTHER" id="PTHR14614">
    <property type="entry name" value="HEPATOCELLULAR CARCINOMA-ASSOCIATED ANTIGEN"/>
    <property type="match status" value="1"/>
</dbReference>
<dbReference type="PANTHER" id="PTHR14614:SF109">
    <property type="entry name" value="RIBOSOMAL LYSINE N-METHYLTRANSFERASE 5"/>
    <property type="match status" value="1"/>
</dbReference>
<accession>C5DMU9</accession>
<reference key="1">
    <citation type="journal article" date="2009" name="Genome Res.">
        <title>Comparative genomics of protoploid Saccharomycetaceae.</title>
        <authorList>
            <consortium name="The Genolevures Consortium"/>
            <person name="Souciet J.-L."/>
            <person name="Dujon B."/>
            <person name="Gaillardin C."/>
            <person name="Johnston M."/>
            <person name="Baret P.V."/>
            <person name="Cliften P."/>
            <person name="Sherman D.J."/>
            <person name="Weissenbach J."/>
            <person name="Westhof E."/>
            <person name="Wincker P."/>
            <person name="Jubin C."/>
            <person name="Poulain J."/>
            <person name="Barbe V."/>
            <person name="Segurens B."/>
            <person name="Artiguenave F."/>
            <person name="Anthouard V."/>
            <person name="Vacherie B."/>
            <person name="Val M.-E."/>
            <person name="Fulton R.S."/>
            <person name="Minx P."/>
            <person name="Wilson R."/>
            <person name="Durrens P."/>
            <person name="Jean G."/>
            <person name="Marck C."/>
            <person name="Martin T."/>
            <person name="Nikolski M."/>
            <person name="Rolland T."/>
            <person name="Seret M.-L."/>
            <person name="Casaregola S."/>
            <person name="Despons L."/>
            <person name="Fairhead C."/>
            <person name="Fischer G."/>
            <person name="Lafontaine I."/>
            <person name="Leh V."/>
            <person name="Lemaire M."/>
            <person name="de Montigny J."/>
            <person name="Neuveglise C."/>
            <person name="Thierry A."/>
            <person name="Blanc-Lenfle I."/>
            <person name="Bleykasten C."/>
            <person name="Diffels J."/>
            <person name="Fritsch E."/>
            <person name="Frangeul L."/>
            <person name="Goeffon A."/>
            <person name="Jauniaux N."/>
            <person name="Kachouri-Lafond R."/>
            <person name="Payen C."/>
            <person name="Potier S."/>
            <person name="Pribylova L."/>
            <person name="Ozanne C."/>
            <person name="Richard G.-F."/>
            <person name="Sacerdot C."/>
            <person name="Straub M.-L."/>
            <person name="Talla E."/>
        </authorList>
    </citation>
    <scope>NUCLEOTIDE SEQUENCE [LARGE SCALE GENOMIC DNA]</scope>
    <source>
        <strain>ATCC 56472 / CBS 6340 / NRRL Y-8284</strain>
    </source>
</reference>
<keyword id="KW-0489">Methyltransferase</keyword>
<keyword id="KW-1185">Reference proteome</keyword>
<keyword id="KW-0949">S-adenosyl-L-methionine</keyword>
<keyword id="KW-0808">Transferase</keyword>
<gene>
    <name type="primary">RKM5</name>
    <name type="ordered locus">KLTH0G11792g</name>
</gene>
<comment type="function">
    <text evidence="1">S-adenosyl-L-methionine-dependent protein-lysine N-methyltransferase that methylates 60S ribosomal protein L1.</text>
</comment>
<comment type="similarity">
    <text evidence="3">Belongs to the class I-like SAM-binding methyltransferase superfamily. RKM5 family.</text>
</comment>
<sequence length="334" mass="37244">MTAKLKLLDEDGIYEHLFERYSLLQKHANELKQDLGIVSRSSGDLEVSFEPQPGSHVKEHFNFEIAQSLSSLNSSRDNNNSTTGYVVWSTTPFFLQWLLYSPSGAIFGKGGTIEVEGDASHSAYELPAIFGSRTVDTDESSDVPAAPQHIIVELGAGIAGMLCVALANYVDKYVCTDQKGLLNGLKRNIKHNIDELRLRNMESSTLDFEISRRTALKTELDVLDLDWESFGLKSSNFHTLITPAGPSTVCILSMDVVYNEFLIAPYLRTLKKLLQTYEKSGNTSFAILGIQLRDQDVVEMFLSTAVVQFELKVCAIVDSEIDKTRFGLYYITTQ</sequence>